<sequence length="565" mass="63408">MRQSKFFMPTLKEAPSDAVAESHKLMIRGGYIRQVTAGVYAYLPLGYRVLRKAESIIEQEMDNINVPEMMMPHLLPATLWQESGRYQKYGAEMFKLKDRHGRESLLGPTHEETFTEIIAKNLKSYKQMPLALYQIQTKFRDENRPRFGLLRGREFVMLDGYSFAATREQLDQQFDDQKSAYKRIFKRAGVTVHPVIADSGTMGGKNSTEFQAPAAIGEDTIATNEKGTYAANLEMAKSIDTFKQEPEEAKELTKVATPACDTIKKLAEFLDVPATRIVKSILYIADDQKVLVLIRGDKQINEVKLGHVLDADDIHEANTEDLKEITGSEKGGVGPVNADWADKIIADETVKGLYNVVVGAGETDYQFKNANLDRDFKVDEFADIRTANEGEPDPVDHLPLKFTTSIEVGHIFKLGTYYTKTMGADFLDQNGKAQPVIMGSYGIGVTRMLSAVVEQHLTDRGVAWPKEIAPFEIHIVQMKMNKEDQTELAEKLEKKFSEKYDVLYDDRKERAGVKFADADLVGAPVRITIGKKAADGIVEVKRPTDEKAVEMSIDELDKFVNQELG</sequence>
<dbReference type="EC" id="6.1.1.15" evidence="1"/>
<dbReference type="EMBL" id="CP000033">
    <property type="protein sequence ID" value="AAV43094.1"/>
    <property type="molecule type" value="Genomic_DNA"/>
</dbReference>
<dbReference type="RefSeq" id="WP_003547819.1">
    <property type="nucleotide sequence ID" value="NC_006814.3"/>
</dbReference>
<dbReference type="RefSeq" id="YP_194125.1">
    <property type="nucleotide sequence ID" value="NC_006814.3"/>
</dbReference>
<dbReference type="SMR" id="Q5FJN0"/>
<dbReference type="STRING" id="272621.LBA1262"/>
<dbReference type="KEGG" id="lac:LBA1262"/>
<dbReference type="PATRIC" id="fig|272621.13.peg.1196"/>
<dbReference type="eggNOG" id="COG0442">
    <property type="taxonomic scope" value="Bacteria"/>
</dbReference>
<dbReference type="HOGENOM" id="CLU_016739_0_0_9"/>
<dbReference type="OrthoDB" id="9809052at2"/>
<dbReference type="BioCyc" id="LACI272621:G1G49-1244-MONOMER"/>
<dbReference type="Proteomes" id="UP000006381">
    <property type="component" value="Chromosome"/>
</dbReference>
<dbReference type="GO" id="GO:0005829">
    <property type="term" value="C:cytosol"/>
    <property type="evidence" value="ECO:0007669"/>
    <property type="project" value="TreeGrafter"/>
</dbReference>
<dbReference type="GO" id="GO:0002161">
    <property type="term" value="F:aminoacyl-tRNA deacylase activity"/>
    <property type="evidence" value="ECO:0007669"/>
    <property type="project" value="InterPro"/>
</dbReference>
<dbReference type="GO" id="GO:0005524">
    <property type="term" value="F:ATP binding"/>
    <property type="evidence" value="ECO:0007669"/>
    <property type="project" value="UniProtKB-UniRule"/>
</dbReference>
<dbReference type="GO" id="GO:0140096">
    <property type="term" value="F:catalytic activity, acting on a protein"/>
    <property type="evidence" value="ECO:0007669"/>
    <property type="project" value="UniProtKB-ARBA"/>
</dbReference>
<dbReference type="GO" id="GO:0004827">
    <property type="term" value="F:proline-tRNA ligase activity"/>
    <property type="evidence" value="ECO:0007669"/>
    <property type="project" value="UniProtKB-UniRule"/>
</dbReference>
<dbReference type="GO" id="GO:0016740">
    <property type="term" value="F:transferase activity"/>
    <property type="evidence" value="ECO:0007669"/>
    <property type="project" value="UniProtKB-ARBA"/>
</dbReference>
<dbReference type="GO" id="GO:0006433">
    <property type="term" value="P:prolyl-tRNA aminoacylation"/>
    <property type="evidence" value="ECO:0007669"/>
    <property type="project" value="UniProtKB-UniRule"/>
</dbReference>
<dbReference type="CDD" id="cd04334">
    <property type="entry name" value="ProRS-INS"/>
    <property type="match status" value="1"/>
</dbReference>
<dbReference type="CDD" id="cd00861">
    <property type="entry name" value="ProRS_anticodon_short"/>
    <property type="match status" value="1"/>
</dbReference>
<dbReference type="CDD" id="cd00779">
    <property type="entry name" value="ProRS_core_prok"/>
    <property type="match status" value="1"/>
</dbReference>
<dbReference type="FunFam" id="3.40.50.800:FF:000011">
    <property type="entry name" value="Proline--tRNA ligase"/>
    <property type="match status" value="1"/>
</dbReference>
<dbReference type="Gene3D" id="3.40.50.800">
    <property type="entry name" value="Anticodon-binding domain"/>
    <property type="match status" value="1"/>
</dbReference>
<dbReference type="Gene3D" id="3.30.930.10">
    <property type="entry name" value="Bira Bifunctional Protein, Domain 2"/>
    <property type="match status" value="2"/>
</dbReference>
<dbReference type="Gene3D" id="3.90.960.10">
    <property type="entry name" value="YbaK/aminoacyl-tRNA synthetase-associated domain"/>
    <property type="match status" value="1"/>
</dbReference>
<dbReference type="HAMAP" id="MF_01569">
    <property type="entry name" value="Pro_tRNA_synth_type1"/>
    <property type="match status" value="1"/>
</dbReference>
<dbReference type="InterPro" id="IPR002314">
    <property type="entry name" value="aa-tRNA-synt_IIb"/>
</dbReference>
<dbReference type="InterPro" id="IPR006195">
    <property type="entry name" value="aa-tRNA-synth_II"/>
</dbReference>
<dbReference type="InterPro" id="IPR045864">
    <property type="entry name" value="aa-tRNA-synth_II/BPL/LPL"/>
</dbReference>
<dbReference type="InterPro" id="IPR004154">
    <property type="entry name" value="Anticodon-bd"/>
</dbReference>
<dbReference type="InterPro" id="IPR036621">
    <property type="entry name" value="Anticodon-bd_dom_sf"/>
</dbReference>
<dbReference type="InterPro" id="IPR002316">
    <property type="entry name" value="Pro-tRNA-ligase_IIa"/>
</dbReference>
<dbReference type="InterPro" id="IPR004500">
    <property type="entry name" value="Pro-tRNA-synth_IIa_bac-type"/>
</dbReference>
<dbReference type="InterPro" id="IPR023717">
    <property type="entry name" value="Pro-tRNA-Synthase_IIa_type1"/>
</dbReference>
<dbReference type="InterPro" id="IPR050062">
    <property type="entry name" value="Pro-tRNA_synthetase"/>
</dbReference>
<dbReference type="InterPro" id="IPR044140">
    <property type="entry name" value="ProRS_anticodon_short"/>
</dbReference>
<dbReference type="InterPro" id="IPR033730">
    <property type="entry name" value="ProRS_core_prok"/>
</dbReference>
<dbReference type="InterPro" id="IPR036754">
    <property type="entry name" value="YbaK/aa-tRNA-synt-asso_dom_sf"/>
</dbReference>
<dbReference type="InterPro" id="IPR007214">
    <property type="entry name" value="YbaK/aa-tRNA-synth-assoc-dom"/>
</dbReference>
<dbReference type="NCBIfam" id="NF006625">
    <property type="entry name" value="PRK09194.1"/>
    <property type="match status" value="1"/>
</dbReference>
<dbReference type="NCBIfam" id="TIGR00409">
    <property type="entry name" value="proS_fam_II"/>
    <property type="match status" value="1"/>
</dbReference>
<dbReference type="PANTHER" id="PTHR42753">
    <property type="entry name" value="MITOCHONDRIAL RIBOSOME PROTEIN L39/PROLYL-TRNA LIGASE FAMILY MEMBER"/>
    <property type="match status" value="1"/>
</dbReference>
<dbReference type="PANTHER" id="PTHR42753:SF2">
    <property type="entry name" value="PROLINE--TRNA LIGASE"/>
    <property type="match status" value="1"/>
</dbReference>
<dbReference type="Pfam" id="PF03129">
    <property type="entry name" value="HGTP_anticodon"/>
    <property type="match status" value="1"/>
</dbReference>
<dbReference type="Pfam" id="PF00587">
    <property type="entry name" value="tRNA-synt_2b"/>
    <property type="match status" value="1"/>
</dbReference>
<dbReference type="Pfam" id="PF04073">
    <property type="entry name" value="tRNA_edit"/>
    <property type="match status" value="1"/>
</dbReference>
<dbReference type="PRINTS" id="PR01046">
    <property type="entry name" value="TRNASYNTHPRO"/>
</dbReference>
<dbReference type="SUPFAM" id="SSF52954">
    <property type="entry name" value="Class II aaRS ABD-related"/>
    <property type="match status" value="1"/>
</dbReference>
<dbReference type="SUPFAM" id="SSF55681">
    <property type="entry name" value="Class II aaRS and biotin synthetases"/>
    <property type="match status" value="1"/>
</dbReference>
<dbReference type="SUPFAM" id="SSF55826">
    <property type="entry name" value="YbaK/ProRS associated domain"/>
    <property type="match status" value="1"/>
</dbReference>
<dbReference type="PROSITE" id="PS50862">
    <property type="entry name" value="AA_TRNA_LIGASE_II"/>
    <property type="match status" value="1"/>
</dbReference>
<evidence type="ECO:0000255" key="1">
    <source>
        <dbReference type="HAMAP-Rule" id="MF_01569"/>
    </source>
</evidence>
<comment type="function">
    <text evidence="1">Catalyzes the attachment of proline to tRNA(Pro) in a two-step reaction: proline is first activated by ATP to form Pro-AMP and then transferred to the acceptor end of tRNA(Pro). As ProRS can inadvertently accommodate and process non-cognate amino acids such as alanine and cysteine, to avoid such errors it has two additional distinct editing activities against alanine. One activity is designated as 'pretransfer' editing and involves the tRNA(Pro)-independent hydrolysis of activated Ala-AMP. The other activity is designated 'posttransfer' editing and involves deacylation of mischarged Ala-tRNA(Pro). The misacylated Cys-tRNA(Pro) is not edited by ProRS.</text>
</comment>
<comment type="catalytic activity">
    <reaction evidence="1">
        <text>tRNA(Pro) + L-proline + ATP = L-prolyl-tRNA(Pro) + AMP + diphosphate</text>
        <dbReference type="Rhea" id="RHEA:14305"/>
        <dbReference type="Rhea" id="RHEA-COMP:9700"/>
        <dbReference type="Rhea" id="RHEA-COMP:9702"/>
        <dbReference type="ChEBI" id="CHEBI:30616"/>
        <dbReference type="ChEBI" id="CHEBI:33019"/>
        <dbReference type="ChEBI" id="CHEBI:60039"/>
        <dbReference type="ChEBI" id="CHEBI:78442"/>
        <dbReference type="ChEBI" id="CHEBI:78532"/>
        <dbReference type="ChEBI" id="CHEBI:456215"/>
        <dbReference type="EC" id="6.1.1.15"/>
    </reaction>
</comment>
<comment type="subunit">
    <text evidence="1">Homodimer.</text>
</comment>
<comment type="subcellular location">
    <subcellularLocation>
        <location evidence="1">Cytoplasm</location>
    </subcellularLocation>
</comment>
<comment type="domain">
    <text evidence="1">Consists of three domains: the N-terminal catalytic domain, the editing domain and the C-terminal anticodon-binding domain.</text>
</comment>
<comment type="similarity">
    <text evidence="1">Belongs to the class-II aminoacyl-tRNA synthetase family. ProS type 1 subfamily.</text>
</comment>
<feature type="chain" id="PRO_0000248705" description="Proline--tRNA ligase">
    <location>
        <begin position="1"/>
        <end position="565"/>
    </location>
</feature>
<name>SYP_LACAC</name>
<accession>Q5FJN0</accession>
<protein>
    <recommendedName>
        <fullName evidence="1">Proline--tRNA ligase</fullName>
        <ecNumber evidence="1">6.1.1.15</ecNumber>
    </recommendedName>
    <alternativeName>
        <fullName evidence="1">Prolyl-tRNA synthetase</fullName>
        <shortName evidence="1">ProRS</shortName>
    </alternativeName>
</protein>
<gene>
    <name evidence="1" type="primary">proS</name>
    <name type="ordered locus">LBA1262</name>
</gene>
<organism>
    <name type="scientific">Lactobacillus acidophilus (strain ATCC 700396 / NCK56 / N2 / NCFM)</name>
    <dbReference type="NCBI Taxonomy" id="272621"/>
    <lineage>
        <taxon>Bacteria</taxon>
        <taxon>Bacillati</taxon>
        <taxon>Bacillota</taxon>
        <taxon>Bacilli</taxon>
        <taxon>Lactobacillales</taxon>
        <taxon>Lactobacillaceae</taxon>
        <taxon>Lactobacillus</taxon>
    </lineage>
</organism>
<keyword id="KW-0030">Aminoacyl-tRNA synthetase</keyword>
<keyword id="KW-0067">ATP-binding</keyword>
<keyword id="KW-0963">Cytoplasm</keyword>
<keyword id="KW-0436">Ligase</keyword>
<keyword id="KW-0547">Nucleotide-binding</keyword>
<keyword id="KW-0648">Protein biosynthesis</keyword>
<keyword id="KW-1185">Reference proteome</keyword>
<reference key="1">
    <citation type="journal article" date="2005" name="Proc. Natl. Acad. Sci. U.S.A.">
        <title>Complete genome sequence of the probiotic lactic acid bacterium Lactobacillus acidophilus NCFM.</title>
        <authorList>
            <person name="Altermann E."/>
            <person name="Russell W.M."/>
            <person name="Azcarate-Peril M.A."/>
            <person name="Barrangou R."/>
            <person name="Buck B.L."/>
            <person name="McAuliffe O."/>
            <person name="Souther N."/>
            <person name="Dobson A."/>
            <person name="Duong T."/>
            <person name="Callanan M."/>
            <person name="Lick S."/>
            <person name="Hamrick A."/>
            <person name="Cano R."/>
            <person name="Klaenhammer T.R."/>
        </authorList>
    </citation>
    <scope>NUCLEOTIDE SEQUENCE [LARGE SCALE GENOMIC DNA]</scope>
    <source>
        <strain>ATCC 700396 / NCK56 / N2 / NCFM</strain>
    </source>
</reference>
<proteinExistence type="inferred from homology"/>